<sequence length="178" mass="19744">MSYYDVDSILTDSQKLPCTFELEVPGLGILEGNPGEDIKAGTRIDLPLWLGVMLSIGARLGTSRLVTLDLPSALSDRVVNALKADPRTVDLRSLAPHFYSLSERVLDLFEEEEMVDVLINTFKKRAAEIADHAHNPKGALGEGADFLRGLDETERQLFRVAHDSARETRIWAGEAKKR</sequence>
<organism>
    <name type="scientific">Aspergillus fumigatus (strain ATCC MYA-4609 / CBS 101355 / FGSC A1100 / Af293)</name>
    <name type="common">Neosartorya fumigata</name>
    <dbReference type="NCBI Taxonomy" id="330879"/>
    <lineage>
        <taxon>Eukaryota</taxon>
        <taxon>Fungi</taxon>
        <taxon>Dikarya</taxon>
        <taxon>Ascomycota</taxon>
        <taxon>Pezizomycotina</taxon>
        <taxon>Eurotiomycetes</taxon>
        <taxon>Eurotiomycetidae</taxon>
        <taxon>Eurotiales</taxon>
        <taxon>Aspergillaceae</taxon>
        <taxon>Aspergillus</taxon>
        <taxon>Aspergillus subgen. Fumigati</taxon>
    </lineage>
</organism>
<name>PSF3_ASPFU</name>
<comment type="function">
    <text evidence="1">The GINS complex plays an essential role in the initiation of DNA replication.</text>
</comment>
<comment type="subunit">
    <text evidence="1">Component of the GINS complex which is a heterotetramer of sld5, psf1, psf2 and psf3.</text>
</comment>
<comment type="subcellular location">
    <subcellularLocation>
        <location evidence="1">Nucleus</location>
    </subcellularLocation>
</comment>
<comment type="similarity">
    <text evidence="2">Belongs to the GINS3/PSF3 family.</text>
</comment>
<feature type="chain" id="PRO_0000278414" description="DNA replication complex GINS protein psf3">
    <location>
        <begin position="1"/>
        <end position="178"/>
    </location>
</feature>
<accession>Q4WQ54</accession>
<reference key="1">
    <citation type="journal article" date="2005" name="Nature">
        <title>Genomic sequence of the pathogenic and allergenic filamentous fungus Aspergillus fumigatus.</title>
        <authorList>
            <person name="Nierman W.C."/>
            <person name="Pain A."/>
            <person name="Anderson M.J."/>
            <person name="Wortman J.R."/>
            <person name="Kim H.S."/>
            <person name="Arroyo J."/>
            <person name="Berriman M."/>
            <person name="Abe K."/>
            <person name="Archer D.B."/>
            <person name="Bermejo C."/>
            <person name="Bennett J.W."/>
            <person name="Bowyer P."/>
            <person name="Chen D."/>
            <person name="Collins M."/>
            <person name="Coulsen R."/>
            <person name="Davies R."/>
            <person name="Dyer P.S."/>
            <person name="Farman M.L."/>
            <person name="Fedorova N."/>
            <person name="Fedorova N.D."/>
            <person name="Feldblyum T.V."/>
            <person name="Fischer R."/>
            <person name="Fosker N."/>
            <person name="Fraser A."/>
            <person name="Garcia J.L."/>
            <person name="Garcia M.J."/>
            <person name="Goble A."/>
            <person name="Goldman G.H."/>
            <person name="Gomi K."/>
            <person name="Griffith-Jones S."/>
            <person name="Gwilliam R."/>
            <person name="Haas B.J."/>
            <person name="Haas H."/>
            <person name="Harris D.E."/>
            <person name="Horiuchi H."/>
            <person name="Huang J."/>
            <person name="Humphray S."/>
            <person name="Jimenez J."/>
            <person name="Keller N."/>
            <person name="Khouri H."/>
            <person name="Kitamoto K."/>
            <person name="Kobayashi T."/>
            <person name="Konzack S."/>
            <person name="Kulkarni R."/>
            <person name="Kumagai T."/>
            <person name="Lafton A."/>
            <person name="Latge J.-P."/>
            <person name="Li W."/>
            <person name="Lord A."/>
            <person name="Lu C."/>
            <person name="Majoros W.H."/>
            <person name="May G.S."/>
            <person name="Miller B.L."/>
            <person name="Mohamoud Y."/>
            <person name="Molina M."/>
            <person name="Monod M."/>
            <person name="Mouyna I."/>
            <person name="Mulligan S."/>
            <person name="Murphy L.D."/>
            <person name="O'Neil S."/>
            <person name="Paulsen I."/>
            <person name="Penalva M.A."/>
            <person name="Pertea M."/>
            <person name="Price C."/>
            <person name="Pritchard B.L."/>
            <person name="Quail M.A."/>
            <person name="Rabbinowitsch E."/>
            <person name="Rawlins N."/>
            <person name="Rajandream M.A."/>
            <person name="Reichard U."/>
            <person name="Renauld H."/>
            <person name="Robson G.D."/>
            <person name="Rodriguez de Cordoba S."/>
            <person name="Rodriguez-Pena J.M."/>
            <person name="Ronning C.M."/>
            <person name="Rutter S."/>
            <person name="Salzberg S.L."/>
            <person name="Sanchez M."/>
            <person name="Sanchez-Ferrero J.C."/>
            <person name="Saunders D."/>
            <person name="Seeger K."/>
            <person name="Squares R."/>
            <person name="Squares S."/>
            <person name="Takeuchi M."/>
            <person name="Tekaia F."/>
            <person name="Turner G."/>
            <person name="Vazquez de Aldana C.R."/>
            <person name="Weidman J."/>
            <person name="White O."/>
            <person name="Woodward J.R."/>
            <person name="Yu J.-H."/>
            <person name="Fraser C.M."/>
            <person name="Galagan J.E."/>
            <person name="Asai K."/>
            <person name="Machida M."/>
            <person name="Hall N."/>
            <person name="Barrell B.G."/>
            <person name="Denning D.W."/>
        </authorList>
    </citation>
    <scope>NUCLEOTIDE SEQUENCE [LARGE SCALE GENOMIC DNA]</scope>
    <source>
        <strain>ATCC MYA-4609 / CBS 101355 / FGSC A1100 / Af293</strain>
    </source>
</reference>
<dbReference type="EMBL" id="AAHF01000005">
    <property type="protein sequence ID" value="EAL89630.2"/>
    <property type="molecule type" value="Genomic_DNA"/>
</dbReference>
<dbReference type="RefSeq" id="XP_751668.2">
    <property type="nucleotide sequence ID" value="XM_746575.2"/>
</dbReference>
<dbReference type="SMR" id="Q4WQ54"/>
<dbReference type="FunCoup" id="Q4WQ54">
    <property type="interactions" value="397"/>
</dbReference>
<dbReference type="STRING" id="330879.Q4WQ54"/>
<dbReference type="EnsemblFungi" id="EAL89630">
    <property type="protein sequence ID" value="EAL89630"/>
    <property type="gene ID" value="AFUA_4G11620"/>
</dbReference>
<dbReference type="GeneID" id="3509726"/>
<dbReference type="KEGG" id="afm:AFUA_4G11620"/>
<dbReference type="VEuPathDB" id="FungiDB:Afu4g11620"/>
<dbReference type="eggNOG" id="KOG1106">
    <property type="taxonomic scope" value="Eukaryota"/>
</dbReference>
<dbReference type="HOGENOM" id="CLU_081646_0_1_1"/>
<dbReference type="InParanoid" id="Q4WQ54"/>
<dbReference type="OMA" id="IYKEGWR"/>
<dbReference type="OrthoDB" id="10251744at2759"/>
<dbReference type="Proteomes" id="UP000002530">
    <property type="component" value="Chromosome 4"/>
</dbReference>
<dbReference type="GO" id="GO:0000785">
    <property type="term" value="C:chromatin"/>
    <property type="evidence" value="ECO:0007669"/>
    <property type="project" value="EnsemblFungi"/>
</dbReference>
<dbReference type="GO" id="GO:0071162">
    <property type="term" value="C:CMG complex"/>
    <property type="evidence" value="ECO:0007669"/>
    <property type="project" value="EnsemblFungi"/>
</dbReference>
<dbReference type="GO" id="GO:0000811">
    <property type="term" value="C:GINS complex"/>
    <property type="evidence" value="ECO:0000318"/>
    <property type="project" value="GO_Central"/>
</dbReference>
<dbReference type="GO" id="GO:0043596">
    <property type="term" value="C:nuclear replication fork"/>
    <property type="evidence" value="ECO:0007669"/>
    <property type="project" value="EnsemblFungi"/>
</dbReference>
<dbReference type="GO" id="GO:0000727">
    <property type="term" value="P:double-strand break repair via break-induced replication"/>
    <property type="evidence" value="ECO:0007669"/>
    <property type="project" value="EnsemblFungi"/>
</dbReference>
<dbReference type="GO" id="GO:1902975">
    <property type="term" value="P:mitotic DNA replication initiation"/>
    <property type="evidence" value="ECO:0000318"/>
    <property type="project" value="GO_Central"/>
</dbReference>
<dbReference type="CDD" id="cd11713">
    <property type="entry name" value="GINS_A_psf3"/>
    <property type="match status" value="1"/>
</dbReference>
<dbReference type="CDD" id="cd21693">
    <property type="entry name" value="GINS_B_Psf3"/>
    <property type="match status" value="1"/>
</dbReference>
<dbReference type="Gene3D" id="1.20.58.2050">
    <property type="match status" value="1"/>
</dbReference>
<dbReference type="InterPro" id="IPR021151">
    <property type="entry name" value="GINS_A"/>
</dbReference>
<dbReference type="InterPro" id="IPR036224">
    <property type="entry name" value="GINS_bundle-like_dom_sf"/>
</dbReference>
<dbReference type="InterPro" id="IPR010492">
    <property type="entry name" value="GINS_Psf3"/>
</dbReference>
<dbReference type="InterPro" id="IPR038437">
    <property type="entry name" value="GINS_Psf3_sf"/>
</dbReference>
<dbReference type="InterPro" id="IPR055221">
    <property type="entry name" value="PSF3_N"/>
</dbReference>
<dbReference type="PANTHER" id="PTHR22768">
    <property type="entry name" value="DNA REPLICATION COMPLEX GINS PROTEIN PSF3"/>
    <property type="match status" value="1"/>
</dbReference>
<dbReference type="PANTHER" id="PTHR22768:SF0">
    <property type="entry name" value="DNA REPLICATION COMPLEX GINS PROTEIN PSF3"/>
    <property type="match status" value="1"/>
</dbReference>
<dbReference type="Pfam" id="PF22466">
    <property type="entry name" value="PSF3_N"/>
    <property type="match status" value="1"/>
</dbReference>
<dbReference type="Pfam" id="PF05916">
    <property type="entry name" value="Sld5"/>
    <property type="match status" value="1"/>
</dbReference>
<dbReference type="SUPFAM" id="SSF158573">
    <property type="entry name" value="GINS helical bundle-like"/>
    <property type="match status" value="1"/>
</dbReference>
<dbReference type="SUPFAM" id="SSF160059">
    <property type="entry name" value="PriA/YqbF domain"/>
    <property type="match status" value="1"/>
</dbReference>
<proteinExistence type="inferred from homology"/>
<evidence type="ECO:0000250" key="1"/>
<evidence type="ECO:0000305" key="2"/>
<protein>
    <recommendedName>
        <fullName>DNA replication complex GINS protein psf3</fullName>
    </recommendedName>
</protein>
<keyword id="KW-0235">DNA replication</keyword>
<keyword id="KW-0539">Nucleus</keyword>
<keyword id="KW-1185">Reference proteome</keyword>
<gene>
    <name type="primary">psf3</name>
    <name type="ORF">AFUA_4G11620</name>
</gene>